<evidence type="ECO:0000250" key="1">
    <source>
        <dbReference type="UniProtKB" id="Q8TB61"/>
    </source>
</evidence>
<evidence type="ECO:0000255" key="2"/>
<evidence type="ECO:0000256" key="3">
    <source>
        <dbReference type="SAM" id="MobiDB-lite"/>
    </source>
</evidence>
<evidence type="ECO:0000305" key="4"/>
<feature type="chain" id="PRO_0000330912" description="Adenosine 3'-phospho 5'-phosphosulfate transporter 1">
    <location>
        <begin position="1"/>
        <end position="359"/>
    </location>
</feature>
<feature type="transmembrane region" description="Helical" evidence="2">
    <location>
        <begin position="26"/>
        <end position="46"/>
    </location>
</feature>
<feature type="transmembrane region" description="Helical" evidence="2">
    <location>
        <begin position="68"/>
        <end position="88"/>
    </location>
</feature>
<feature type="transmembrane region" description="Helical" evidence="2">
    <location>
        <begin position="157"/>
        <end position="177"/>
    </location>
</feature>
<feature type="transmembrane region" description="Helical" evidence="2">
    <location>
        <begin position="184"/>
        <end position="204"/>
    </location>
</feature>
<feature type="transmembrane region" description="Helical" evidence="2">
    <location>
        <begin position="228"/>
        <end position="248"/>
    </location>
</feature>
<feature type="transmembrane region" description="Helical" evidence="2">
    <location>
        <begin position="254"/>
        <end position="276"/>
    </location>
</feature>
<feature type="transmembrane region" description="Helical" evidence="2">
    <location>
        <begin position="300"/>
        <end position="320"/>
    </location>
</feature>
<feature type="region of interest" description="Disordered" evidence="3">
    <location>
        <begin position="332"/>
        <end position="359"/>
    </location>
</feature>
<feature type="compositionally biased region" description="Low complexity" evidence="3">
    <location>
        <begin position="340"/>
        <end position="359"/>
    </location>
</feature>
<reference key="1">
    <citation type="journal article" date="2005" name="Nature">
        <title>The genome of the social amoeba Dictyostelium discoideum.</title>
        <authorList>
            <person name="Eichinger L."/>
            <person name="Pachebat J.A."/>
            <person name="Gloeckner G."/>
            <person name="Rajandream M.A."/>
            <person name="Sucgang R."/>
            <person name="Berriman M."/>
            <person name="Song J."/>
            <person name="Olsen R."/>
            <person name="Szafranski K."/>
            <person name="Xu Q."/>
            <person name="Tunggal B."/>
            <person name="Kummerfeld S."/>
            <person name="Madera M."/>
            <person name="Konfortov B.A."/>
            <person name="Rivero F."/>
            <person name="Bankier A.T."/>
            <person name="Lehmann R."/>
            <person name="Hamlin N."/>
            <person name="Davies R."/>
            <person name="Gaudet P."/>
            <person name="Fey P."/>
            <person name="Pilcher K."/>
            <person name="Chen G."/>
            <person name="Saunders D."/>
            <person name="Sodergren E.J."/>
            <person name="Davis P."/>
            <person name="Kerhornou A."/>
            <person name="Nie X."/>
            <person name="Hall N."/>
            <person name="Anjard C."/>
            <person name="Hemphill L."/>
            <person name="Bason N."/>
            <person name="Farbrother P."/>
            <person name="Desany B."/>
            <person name="Just E."/>
            <person name="Morio T."/>
            <person name="Rost R."/>
            <person name="Churcher C.M."/>
            <person name="Cooper J."/>
            <person name="Haydock S."/>
            <person name="van Driessche N."/>
            <person name="Cronin A."/>
            <person name="Goodhead I."/>
            <person name="Muzny D.M."/>
            <person name="Mourier T."/>
            <person name="Pain A."/>
            <person name="Lu M."/>
            <person name="Harper D."/>
            <person name="Lindsay R."/>
            <person name="Hauser H."/>
            <person name="James K.D."/>
            <person name="Quiles M."/>
            <person name="Madan Babu M."/>
            <person name="Saito T."/>
            <person name="Buchrieser C."/>
            <person name="Wardroper A."/>
            <person name="Felder M."/>
            <person name="Thangavelu M."/>
            <person name="Johnson D."/>
            <person name="Knights A."/>
            <person name="Loulseged H."/>
            <person name="Mungall K.L."/>
            <person name="Oliver K."/>
            <person name="Price C."/>
            <person name="Quail M.A."/>
            <person name="Urushihara H."/>
            <person name="Hernandez J."/>
            <person name="Rabbinowitsch E."/>
            <person name="Steffen D."/>
            <person name="Sanders M."/>
            <person name="Ma J."/>
            <person name="Kohara Y."/>
            <person name="Sharp S."/>
            <person name="Simmonds M.N."/>
            <person name="Spiegler S."/>
            <person name="Tivey A."/>
            <person name="Sugano S."/>
            <person name="White B."/>
            <person name="Walker D."/>
            <person name="Woodward J.R."/>
            <person name="Winckler T."/>
            <person name="Tanaka Y."/>
            <person name="Shaulsky G."/>
            <person name="Schleicher M."/>
            <person name="Weinstock G.M."/>
            <person name="Rosenthal A."/>
            <person name="Cox E.C."/>
            <person name="Chisholm R.L."/>
            <person name="Gibbs R.A."/>
            <person name="Loomis W.F."/>
            <person name="Platzer M."/>
            <person name="Kay R.R."/>
            <person name="Williams J.G."/>
            <person name="Dear P.H."/>
            <person name="Noegel A.A."/>
            <person name="Barrell B.G."/>
            <person name="Kuspa A."/>
        </authorList>
    </citation>
    <scope>NUCLEOTIDE SEQUENCE [LARGE SCALE GENOMIC DNA]</scope>
    <source>
        <strain>AX4</strain>
    </source>
</reference>
<proteinExistence type="inferred from homology"/>
<comment type="function">
    <text evidence="1">Probably functions as a 3'-phosphoadenylyl sulfate:adenosine 3',5'-bisphosphate antiporter at the Golgi membranes. Mediates the transport from the cytosol into the lumen of the Golgi of 3'-phosphoadenylyl sulfate/adenosine 3'-phospho 5'-phosphosulfate (PAPS), a universal sulfuryl donor for sulfation events that take place in that compartment.</text>
</comment>
<comment type="catalytic activity">
    <reaction evidence="1">
        <text>3'-phosphoadenylyl sulfate(in) + adenosine 3',5'-bisphosphate(out) = 3'-phosphoadenylyl sulfate(out) + adenosine 3',5'-bisphosphate(in)</text>
        <dbReference type="Rhea" id="RHEA:76063"/>
        <dbReference type="ChEBI" id="CHEBI:58339"/>
        <dbReference type="ChEBI" id="CHEBI:58343"/>
    </reaction>
</comment>
<comment type="subcellular location">
    <subcellularLocation>
        <location evidence="1">Golgi apparatus membrane</location>
        <topology evidence="2">Multi-pass membrane protein</topology>
    </subcellularLocation>
</comment>
<comment type="similarity">
    <text evidence="4">Belongs to the nucleotide-sugar transporter family. SLC35B subfamily.</text>
</comment>
<organism>
    <name type="scientific">Dictyostelium discoideum</name>
    <name type="common">Social amoeba</name>
    <dbReference type="NCBI Taxonomy" id="44689"/>
    <lineage>
        <taxon>Eukaryota</taxon>
        <taxon>Amoebozoa</taxon>
        <taxon>Evosea</taxon>
        <taxon>Eumycetozoa</taxon>
        <taxon>Dictyostelia</taxon>
        <taxon>Dictyosteliales</taxon>
        <taxon>Dictyosteliaceae</taxon>
        <taxon>Dictyostelium</taxon>
    </lineage>
</organism>
<gene>
    <name type="primary">slc35b2</name>
    <name type="ORF">DDB_G0269602</name>
</gene>
<name>S35B2_DICDI</name>
<keyword id="KW-0050">Antiport</keyword>
<keyword id="KW-0333">Golgi apparatus</keyword>
<keyword id="KW-0472">Membrane</keyword>
<keyword id="KW-1185">Reference proteome</keyword>
<keyword id="KW-0812">Transmembrane</keyword>
<keyword id="KW-1133">Transmembrane helix</keyword>
<keyword id="KW-0813">Transport</keyword>
<protein>
    <recommendedName>
        <fullName evidence="4">Adenosine 3'-phospho 5'-phosphosulfate transporter 1</fullName>
    </recommendedName>
    <alternativeName>
        <fullName>Solute carrier family 35 member B2</fullName>
    </alternativeName>
</protein>
<dbReference type="EMBL" id="AAFI02000005">
    <property type="protein sequence ID" value="EAL72151.1"/>
    <property type="molecule type" value="Genomic_DNA"/>
</dbReference>
<dbReference type="RefSeq" id="XP_646106.1">
    <property type="nucleotide sequence ID" value="XM_641014.1"/>
</dbReference>
<dbReference type="SMR" id="Q55DM5"/>
<dbReference type="FunCoup" id="Q55DM5">
    <property type="interactions" value="83"/>
</dbReference>
<dbReference type="STRING" id="44689.Q55DM5"/>
<dbReference type="EnsemblProtists" id="EAL72151">
    <property type="protein sequence ID" value="EAL72151"/>
    <property type="gene ID" value="DDB_G0269602"/>
</dbReference>
<dbReference type="GeneID" id="8617056"/>
<dbReference type="KEGG" id="ddi:DDB_G0269602"/>
<dbReference type="dictyBase" id="DDB_G0269602">
    <property type="gene designation" value="slc35b2"/>
</dbReference>
<dbReference type="VEuPathDB" id="AmoebaDB:DDB_G0269602"/>
<dbReference type="InParanoid" id="Q55DM5"/>
<dbReference type="OMA" id="KIMTQHY"/>
<dbReference type="PhylomeDB" id="Q55DM5"/>
<dbReference type="Reactome" id="R-DDI-174362">
    <property type="pathway name" value="Transport and synthesis of PAPS"/>
</dbReference>
<dbReference type="Reactome" id="R-DDI-727802">
    <property type="pathway name" value="Transport of nucleotide sugars"/>
</dbReference>
<dbReference type="PRO" id="PR:Q55DM5"/>
<dbReference type="Proteomes" id="UP000002195">
    <property type="component" value="Chromosome 1"/>
</dbReference>
<dbReference type="GO" id="GO:0005789">
    <property type="term" value="C:endoplasmic reticulum membrane"/>
    <property type="evidence" value="ECO:0000318"/>
    <property type="project" value="GO_Central"/>
</dbReference>
<dbReference type="GO" id="GO:0000139">
    <property type="term" value="C:Golgi membrane"/>
    <property type="evidence" value="ECO:0000318"/>
    <property type="project" value="GO_Central"/>
</dbReference>
<dbReference type="GO" id="GO:0046964">
    <property type="term" value="F:3'-phosphoadenosine 5'-phosphosulfate transmembrane transporter activity"/>
    <property type="evidence" value="ECO:0000318"/>
    <property type="project" value="GO_Central"/>
</dbReference>
<dbReference type="GO" id="GO:0015297">
    <property type="term" value="F:antiporter activity"/>
    <property type="evidence" value="ECO:0007669"/>
    <property type="project" value="UniProtKB-KW"/>
</dbReference>
<dbReference type="GO" id="GO:0046963">
    <property type="term" value="P:3'-phosphoadenosine 5'-phosphosulfate transport"/>
    <property type="evidence" value="ECO:0000318"/>
    <property type="project" value="GO_Central"/>
</dbReference>
<dbReference type="GO" id="GO:0055085">
    <property type="term" value="P:transmembrane transport"/>
    <property type="evidence" value="ECO:0000318"/>
    <property type="project" value="GO_Central"/>
</dbReference>
<dbReference type="InterPro" id="IPR013657">
    <property type="entry name" value="SCL35B1-4/HUT1"/>
</dbReference>
<dbReference type="PANTHER" id="PTHR10778:SF13">
    <property type="entry name" value="ADENOSINE 3'-PHOSPHO 5'-PHOSPHOSULFATE TRANSPORTER 1"/>
    <property type="match status" value="1"/>
</dbReference>
<dbReference type="PANTHER" id="PTHR10778">
    <property type="entry name" value="SOLUTE CARRIER FAMILY 35 MEMBER B"/>
    <property type="match status" value="1"/>
</dbReference>
<dbReference type="Pfam" id="PF08449">
    <property type="entry name" value="UAA"/>
    <property type="match status" value="1"/>
</dbReference>
<sequence>MGSGIEVNDSSTTNSNNNEKVQLSYNMKLALATGGIMGSFLLYGILQERLMVVPYKNADGSEEYFTDSTFLVLSNRVFAALMAIVIVLKRGESLKNVAPLHKYVGVALSNFCATWCQYEALKYVNFPTQTLGKCGKMLPVMLVGTFISGKKYGLKDYSIALTITTGCMIFFLTGKISNNESSNTSYGIILMALYMFFDSFTSTFQEKMFKGYTMSTYDQMIYVNGCSSIISVFILILNGRLFPAIEFISTHNGVFFDSTMLSASAGLGQMVIYYTIKEFGALVFSTIMVTRQMVSIILSTLIYLHPLSNTQWIGALLVFGTLYYKSIEDSKKKHGGHSHGGSNAATTTTPSNNSNNTEK</sequence>
<accession>Q55DM5</accession>